<sequence length="193" mass="23001">MMINIQEDKLVSAHDAEEFLRFFNSGDEALQQEATTLLTREAHLLDIQAYRAWLEHCVDSEVKYQIISRELRSASERRYQLNETMNIFNENYEQLEVRVAHQLDPQNWGNSPKVRFTRFITNIQAAMDENEDLLHIRSNLIVHRARRGNQVDVFYATREDKWKRGEDGARKLVQRLIDYPERTFQTHNVMIFM</sequence>
<gene>
    <name evidence="1" type="primary">ndoC</name>
    <name type="synonym">pahA4</name>
</gene>
<feature type="chain" id="PRO_0000085074" description="Naphthalene 1,2-dioxygenase system, small oxygenase component">
    <location>
        <begin position="1"/>
        <end position="193"/>
    </location>
</feature>
<dbReference type="EMBL" id="D84146">
    <property type="protein sequence ID" value="BAA12241.1"/>
    <property type="molecule type" value="Genomic_DNA"/>
</dbReference>
<dbReference type="SMR" id="Q51495"/>
<dbReference type="UniPathway" id="UPA00082"/>
<dbReference type="GO" id="GO:0051213">
    <property type="term" value="F:dioxygenase activity"/>
    <property type="evidence" value="ECO:0007669"/>
    <property type="project" value="UniProtKB-KW"/>
</dbReference>
<dbReference type="GO" id="GO:0019380">
    <property type="term" value="P:3-phenylpropionate catabolic process"/>
    <property type="evidence" value="ECO:0007669"/>
    <property type="project" value="TreeGrafter"/>
</dbReference>
<dbReference type="CDD" id="cd00667">
    <property type="entry name" value="ring_hydroxylating_dioxygenases_beta"/>
    <property type="match status" value="1"/>
</dbReference>
<dbReference type="Gene3D" id="3.10.450.50">
    <property type="match status" value="1"/>
</dbReference>
<dbReference type="InterPro" id="IPR032710">
    <property type="entry name" value="NTF2-like_dom_sf"/>
</dbReference>
<dbReference type="InterPro" id="IPR000391">
    <property type="entry name" value="Rng_hydr_dOase-bsu"/>
</dbReference>
<dbReference type="PANTHER" id="PTHR41534:SF2">
    <property type="entry name" value="3-PHENYLPROPIONATE_CINNAMIC ACID DIOXYGENASE SUBUNIT BETA"/>
    <property type="match status" value="1"/>
</dbReference>
<dbReference type="PANTHER" id="PTHR41534">
    <property type="entry name" value="BLR3401 PROTEIN"/>
    <property type="match status" value="1"/>
</dbReference>
<dbReference type="Pfam" id="PF00866">
    <property type="entry name" value="Ring_hydroxyl_B"/>
    <property type="match status" value="1"/>
</dbReference>
<dbReference type="SUPFAM" id="SSF54427">
    <property type="entry name" value="NTF2-like"/>
    <property type="match status" value="1"/>
</dbReference>
<evidence type="ECO:0000250" key="1">
    <source>
        <dbReference type="UniProtKB" id="P0A112"/>
    </source>
</evidence>
<evidence type="ECO:0000305" key="2"/>
<keyword id="KW-0058">Aromatic hydrocarbons catabolism</keyword>
<keyword id="KW-0223">Dioxygenase</keyword>
<keyword id="KW-0560">Oxidoreductase</keyword>
<proteinExistence type="inferred from homology"/>
<organism>
    <name type="scientific">Pseudomonas aeruginosa</name>
    <dbReference type="NCBI Taxonomy" id="287"/>
    <lineage>
        <taxon>Bacteria</taxon>
        <taxon>Pseudomonadati</taxon>
        <taxon>Pseudomonadota</taxon>
        <taxon>Gammaproteobacteria</taxon>
        <taxon>Pseudomonadales</taxon>
        <taxon>Pseudomonadaceae</taxon>
        <taxon>Pseudomonas</taxon>
    </lineage>
</organism>
<protein>
    <recommendedName>
        <fullName evidence="1">Naphthalene 1,2-dioxygenase system, small oxygenase component</fullName>
    </recommendedName>
    <alternativeName>
        <fullName evidence="1">Naphthalene 1,2-dioxygenase ISP beta</fullName>
    </alternativeName>
    <alternativeName>
        <fullName evidence="1">Naphthalene 1,2-dioxygenase subunit beta</fullName>
        <shortName evidence="1">ND subunit beta</shortName>
        <shortName evidence="1">NDO subunit beta</shortName>
    </alternativeName>
</protein>
<accession>Q51495</accession>
<reference key="1">
    <citation type="submission" date="1996-04" db="EMBL/GenBank/DDBJ databases">
        <title>The molecular analysis of an NAH7-type gene cluster, pah, located on the chromosome of Pseudomonas aeruginosa PaK1.</title>
        <authorList>
            <person name="Takizawa N."/>
            <person name="Iida T."/>
            <person name="Yamauchi K."/>
            <person name="Satoh S."/>
            <person name="Wang Y."/>
            <person name="Fukuda M."/>
            <person name="Kiyohara H."/>
        </authorList>
    </citation>
    <scope>NUCLEOTIDE SEQUENCE [GENOMIC DNA]</scope>
    <source>
        <strain>PaK1</strain>
    </source>
</reference>
<comment type="function">
    <text evidence="1">Component of the naphthalene dioxygenase (NDO) multicomponent enzyme system which catalyzes the incorporation of both atoms of molecular oxygen into naphthalene to form cis-(1R,2S)-dihydroxy-1,2-dihydronaphthalene. The beta subunit seems to have a structural role in the holoenzyme.</text>
</comment>
<comment type="pathway">
    <text evidence="1">Aromatic compound metabolism; naphthalene degradation.</text>
</comment>
<comment type="subunit">
    <text evidence="1">The naphthalene dioxygenase (NDO) multicomponent enzyme system is composed of an electron transfer component and a dioxygenase component (iron sulfur protein (ISP)). The electron transfer component is composed of a ferredoxin reductase (NdoR) and a ferredoxin (NdoA), and the dioxygenase component is formed of a heterohexamer (trimer of heterodimers) of three large alpha subunits (NdoB) and three small beta subunits (NdoC).</text>
</comment>
<comment type="similarity">
    <text evidence="2">Belongs to the bacterial ring-hydroxylating dioxygenase beta subunit family.</text>
</comment>
<name>NDOC_PSEAI</name>